<reference key="1">
    <citation type="journal article" date="2004" name="Nucleic Acids Res.">
        <title>Whole genome comparisons of serotype 4b and 1/2a strains of the food-borne pathogen Listeria monocytogenes reveal new insights into the core genome components of this species.</title>
        <authorList>
            <person name="Nelson K.E."/>
            <person name="Fouts D.E."/>
            <person name="Mongodin E.F."/>
            <person name="Ravel J."/>
            <person name="DeBoy R.T."/>
            <person name="Kolonay J.F."/>
            <person name="Rasko D.A."/>
            <person name="Angiuoli S.V."/>
            <person name="Gill S.R."/>
            <person name="Paulsen I.T."/>
            <person name="Peterson J.D."/>
            <person name="White O."/>
            <person name="Nelson W.C."/>
            <person name="Nierman W.C."/>
            <person name="Beanan M.J."/>
            <person name="Brinkac L.M."/>
            <person name="Daugherty S.C."/>
            <person name="Dodson R.J."/>
            <person name="Durkin A.S."/>
            <person name="Madupu R."/>
            <person name="Haft D.H."/>
            <person name="Selengut J."/>
            <person name="Van Aken S.E."/>
            <person name="Khouri H.M."/>
            <person name="Fedorova N."/>
            <person name="Forberger H.A."/>
            <person name="Tran B."/>
            <person name="Kathariou S."/>
            <person name="Wonderling L.D."/>
            <person name="Uhlich G.A."/>
            <person name="Bayles D.O."/>
            <person name="Luchansky J.B."/>
            <person name="Fraser C.M."/>
        </authorList>
    </citation>
    <scope>NUCLEOTIDE SEQUENCE [LARGE SCALE GENOMIC DNA]</scope>
    <source>
        <strain>F2365</strain>
    </source>
</reference>
<gene>
    <name evidence="1" type="primary">rpmD</name>
    <name type="ordered locus">LMOf2365_2587</name>
</gene>
<protein>
    <recommendedName>
        <fullName evidence="1">Large ribosomal subunit protein uL30</fullName>
    </recommendedName>
    <alternativeName>
        <fullName evidence="2">50S ribosomal protein L30</fullName>
    </alternativeName>
</protein>
<keyword id="KW-0687">Ribonucleoprotein</keyword>
<keyword id="KW-0689">Ribosomal protein</keyword>
<accession>Q71WG4</accession>
<dbReference type="EMBL" id="AE017262">
    <property type="protein sequence ID" value="AAT05352.1"/>
    <property type="molecule type" value="Genomic_DNA"/>
</dbReference>
<dbReference type="RefSeq" id="WP_003720933.1">
    <property type="nucleotide sequence ID" value="NC_002973.6"/>
</dbReference>
<dbReference type="SMR" id="Q71WG4"/>
<dbReference type="GeneID" id="93240495"/>
<dbReference type="KEGG" id="lmf:LMOf2365_2587"/>
<dbReference type="HOGENOM" id="CLU_131047_2_1_9"/>
<dbReference type="GO" id="GO:0022625">
    <property type="term" value="C:cytosolic large ribosomal subunit"/>
    <property type="evidence" value="ECO:0007669"/>
    <property type="project" value="TreeGrafter"/>
</dbReference>
<dbReference type="GO" id="GO:0003735">
    <property type="term" value="F:structural constituent of ribosome"/>
    <property type="evidence" value="ECO:0007669"/>
    <property type="project" value="InterPro"/>
</dbReference>
<dbReference type="GO" id="GO:0006412">
    <property type="term" value="P:translation"/>
    <property type="evidence" value="ECO:0007669"/>
    <property type="project" value="UniProtKB-UniRule"/>
</dbReference>
<dbReference type="CDD" id="cd01658">
    <property type="entry name" value="Ribosomal_L30"/>
    <property type="match status" value="1"/>
</dbReference>
<dbReference type="FunFam" id="3.30.1390.20:FF:000001">
    <property type="entry name" value="50S ribosomal protein L30"/>
    <property type="match status" value="1"/>
</dbReference>
<dbReference type="Gene3D" id="3.30.1390.20">
    <property type="entry name" value="Ribosomal protein L30, ferredoxin-like fold domain"/>
    <property type="match status" value="1"/>
</dbReference>
<dbReference type="HAMAP" id="MF_01371_B">
    <property type="entry name" value="Ribosomal_uL30_B"/>
    <property type="match status" value="1"/>
</dbReference>
<dbReference type="InterPro" id="IPR036919">
    <property type="entry name" value="Ribo_uL30_ferredoxin-like_sf"/>
</dbReference>
<dbReference type="InterPro" id="IPR005996">
    <property type="entry name" value="Ribosomal_uL30_bac-type"/>
</dbReference>
<dbReference type="InterPro" id="IPR018038">
    <property type="entry name" value="Ribosomal_uL30_CS"/>
</dbReference>
<dbReference type="InterPro" id="IPR016082">
    <property type="entry name" value="Ribosomal_uL30_ferredoxin-like"/>
</dbReference>
<dbReference type="NCBIfam" id="TIGR01308">
    <property type="entry name" value="rpmD_bact"/>
    <property type="match status" value="1"/>
</dbReference>
<dbReference type="PANTHER" id="PTHR15892:SF2">
    <property type="entry name" value="LARGE RIBOSOMAL SUBUNIT PROTEIN UL30M"/>
    <property type="match status" value="1"/>
</dbReference>
<dbReference type="PANTHER" id="PTHR15892">
    <property type="entry name" value="MITOCHONDRIAL RIBOSOMAL PROTEIN L30"/>
    <property type="match status" value="1"/>
</dbReference>
<dbReference type="Pfam" id="PF00327">
    <property type="entry name" value="Ribosomal_L30"/>
    <property type="match status" value="1"/>
</dbReference>
<dbReference type="PIRSF" id="PIRSF002211">
    <property type="entry name" value="Ribosomal_L30_bac-type"/>
    <property type="match status" value="1"/>
</dbReference>
<dbReference type="SUPFAM" id="SSF55129">
    <property type="entry name" value="Ribosomal protein L30p/L7e"/>
    <property type="match status" value="1"/>
</dbReference>
<dbReference type="PROSITE" id="PS00634">
    <property type="entry name" value="RIBOSOMAL_L30"/>
    <property type="match status" value="1"/>
</dbReference>
<organism>
    <name type="scientific">Listeria monocytogenes serotype 4b (strain F2365)</name>
    <dbReference type="NCBI Taxonomy" id="265669"/>
    <lineage>
        <taxon>Bacteria</taxon>
        <taxon>Bacillati</taxon>
        <taxon>Bacillota</taxon>
        <taxon>Bacilli</taxon>
        <taxon>Bacillales</taxon>
        <taxon>Listeriaceae</taxon>
        <taxon>Listeria</taxon>
    </lineage>
</organism>
<proteinExistence type="inferred from homology"/>
<evidence type="ECO:0000255" key="1">
    <source>
        <dbReference type="HAMAP-Rule" id="MF_01371"/>
    </source>
</evidence>
<evidence type="ECO:0000305" key="2"/>
<sequence length="59" mass="6493">MAKLEITLKRSLIGRPQPQRKTVQALGLGKTNSVVVKEDNPAIRGMITKVSHLVDVKEV</sequence>
<name>RL30_LISMF</name>
<comment type="subunit">
    <text evidence="1">Part of the 50S ribosomal subunit.</text>
</comment>
<comment type="similarity">
    <text evidence="1">Belongs to the universal ribosomal protein uL30 family.</text>
</comment>
<feature type="chain" id="PRO_1000056064" description="Large ribosomal subunit protein uL30">
    <location>
        <begin position="1"/>
        <end position="59"/>
    </location>
</feature>